<accession>P17992</accession>
<comment type="function">
    <text>Sulfur-poor seed storage protein.</text>
</comment>
<comment type="tissue specificity">
    <text>Developing endosperm.</text>
</comment>
<organism>
    <name type="scientific">Hordeum vulgare</name>
    <name type="common">Barley</name>
    <dbReference type="NCBI Taxonomy" id="4513"/>
    <lineage>
        <taxon>Eukaryota</taxon>
        <taxon>Viridiplantae</taxon>
        <taxon>Streptophyta</taxon>
        <taxon>Embryophyta</taxon>
        <taxon>Tracheophyta</taxon>
        <taxon>Spermatophyta</taxon>
        <taxon>Magnoliopsida</taxon>
        <taxon>Liliopsida</taxon>
        <taxon>Poales</taxon>
        <taxon>Poaceae</taxon>
        <taxon>BOP clade</taxon>
        <taxon>Pooideae</taxon>
        <taxon>Triticodae</taxon>
        <taxon>Triticeae</taxon>
        <taxon>Hordeinae</taxon>
        <taxon>Hordeum</taxon>
    </lineage>
</organism>
<name>HOR9_HORVU</name>
<feature type="chain" id="PRO_0000102605" description="C-hordein">
    <location>
        <begin position="1" status="less than"/>
        <end position="68"/>
    </location>
</feature>
<feature type="region of interest" description="Disordered" evidence="1">
    <location>
        <begin position="1"/>
        <end position="68"/>
    </location>
</feature>
<feature type="compositionally biased region" description="Pro residues" evidence="1">
    <location>
        <begin position="1"/>
        <end position="24"/>
    </location>
</feature>
<feature type="compositionally biased region" description="Pro residues" evidence="1">
    <location>
        <begin position="33"/>
        <end position="55"/>
    </location>
</feature>
<feature type="compositionally biased region" description="Polar residues" evidence="1">
    <location>
        <begin position="59"/>
        <end position="68"/>
    </location>
</feature>
<feature type="non-terminal residue">
    <location>
        <position position="1"/>
    </location>
</feature>
<protein>
    <recommendedName>
        <fullName>C-hordein</fullName>
    </recommendedName>
    <alternativeName>
        <fullName>Clone PC-919</fullName>
    </alternativeName>
</protein>
<dbReference type="EMBL" id="M35611">
    <property type="protein sequence ID" value="AAA32944.1"/>
    <property type="molecule type" value="mRNA"/>
</dbReference>
<dbReference type="PIR" id="B25677">
    <property type="entry name" value="B25677"/>
</dbReference>
<dbReference type="SMR" id="P17992"/>
<dbReference type="GO" id="GO:0045735">
    <property type="term" value="F:nutrient reservoir activity"/>
    <property type="evidence" value="ECO:0007669"/>
    <property type="project" value="UniProtKB-KW"/>
</dbReference>
<keyword id="KW-0708">Seed storage protein</keyword>
<keyword id="KW-0758">Storage protein</keyword>
<evidence type="ECO:0000256" key="1">
    <source>
        <dbReference type="SAM" id="MobiDB-lite"/>
    </source>
</evidence>
<reference key="1">
    <citation type="journal article" date="1986" name="Carlsberg Res. Commun.">
        <title>Nucleotide sequences of cDNA clones for C-hordein polypeptides.</title>
        <authorList>
            <person name="Rasmussen S.K."/>
            <person name="Brandt A."/>
        </authorList>
    </citation>
    <scope>NUCLEOTIDE SEQUENCE [MRNA]</scope>
    <source>
        <tissue>Endosperm</tissue>
    </source>
</reference>
<sequence length="68" mass="8045">YPQQPQPFPQQPIPQQPQPYPQQPQPFSQQPIPQQPQPYPQQPQPFPQQPIPLQPHQPYTQQTIWSMV</sequence>
<proteinExistence type="evidence at transcript level"/>